<comment type="function">
    <text evidence="1">Catalyzes the reversible conversion of 2-phosphoglycerate (2-PG) into phosphoenolpyruvate (PEP). It is essential for the degradation of carbohydrates via glycolysis.</text>
</comment>
<comment type="catalytic activity">
    <reaction evidence="1">
        <text>(2R)-2-phosphoglycerate = phosphoenolpyruvate + H2O</text>
        <dbReference type="Rhea" id="RHEA:10164"/>
        <dbReference type="ChEBI" id="CHEBI:15377"/>
        <dbReference type="ChEBI" id="CHEBI:58289"/>
        <dbReference type="ChEBI" id="CHEBI:58702"/>
        <dbReference type="EC" id="4.2.1.11"/>
    </reaction>
</comment>
<comment type="cofactor">
    <cofactor evidence="1">
        <name>Mg(2+)</name>
        <dbReference type="ChEBI" id="CHEBI:18420"/>
    </cofactor>
    <text evidence="1">Binds a second Mg(2+) ion via substrate during catalysis.</text>
</comment>
<comment type="pathway">
    <text evidence="1">Carbohydrate degradation; glycolysis; pyruvate from D-glyceraldehyde 3-phosphate: step 4/5.</text>
</comment>
<comment type="subcellular location">
    <subcellularLocation>
        <location evidence="1">Cytoplasm</location>
    </subcellularLocation>
    <subcellularLocation>
        <location evidence="1">Secreted</location>
    </subcellularLocation>
    <subcellularLocation>
        <location evidence="1">Cell surface</location>
    </subcellularLocation>
    <text evidence="1">Fractions of enolase are present in both the cytoplasm and on the cell surface.</text>
</comment>
<comment type="similarity">
    <text evidence="1">Belongs to the enolase family.</text>
</comment>
<feature type="chain" id="PRO_1000205108" description="Enolase">
    <location>
        <begin position="1"/>
        <end position="419"/>
    </location>
</feature>
<feature type="active site" description="Proton donor" evidence="1">
    <location>
        <position position="205"/>
    </location>
</feature>
<feature type="active site" description="Proton acceptor" evidence="1">
    <location>
        <position position="334"/>
    </location>
</feature>
<feature type="binding site" evidence="1">
    <location>
        <position position="161"/>
    </location>
    <ligand>
        <name>(2R)-2-phosphoglycerate</name>
        <dbReference type="ChEBI" id="CHEBI:58289"/>
    </ligand>
</feature>
<feature type="binding site" evidence="1">
    <location>
        <position position="240"/>
    </location>
    <ligand>
        <name>Mg(2+)</name>
        <dbReference type="ChEBI" id="CHEBI:18420"/>
    </ligand>
</feature>
<feature type="binding site" evidence="1">
    <location>
        <position position="283"/>
    </location>
    <ligand>
        <name>Mg(2+)</name>
        <dbReference type="ChEBI" id="CHEBI:18420"/>
    </ligand>
</feature>
<feature type="binding site" evidence="1">
    <location>
        <position position="309"/>
    </location>
    <ligand>
        <name>Mg(2+)</name>
        <dbReference type="ChEBI" id="CHEBI:18420"/>
    </ligand>
</feature>
<feature type="binding site" evidence="1">
    <location>
        <position position="334"/>
    </location>
    <ligand>
        <name>(2R)-2-phosphoglycerate</name>
        <dbReference type="ChEBI" id="CHEBI:58289"/>
    </ligand>
</feature>
<feature type="binding site" evidence="1">
    <location>
        <position position="363"/>
    </location>
    <ligand>
        <name>(2R)-2-phosphoglycerate</name>
        <dbReference type="ChEBI" id="CHEBI:58289"/>
    </ligand>
</feature>
<feature type="binding site" evidence="1">
    <location>
        <position position="364"/>
    </location>
    <ligand>
        <name>(2R)-2-phosphoglycerate</name>
        <dbReference type="ChEBI" id="CHEBI:58289"/>
    </ligand>
</feature>
<feature type="binding site" evidence="1">
    <location>
        <position position="385"/>
    </location>
    <ligand>
        <name>(2R)-2-phosphoglycerate</name>
        <dbReference type="ChEBI" id="CHEBI:58289"/>
    </ligand>
</feature>
<sequence>MINRFSIEKVKGLEIIDSRGNPTIRVFVRTNDGVESFGDAPAGASKGTREAIEVRDENGLTVKRAVDIANYIIDPALHGIDVREQGIIDKILIDIDSTENKSKLGGNTIIATSIAALKTASKALGLEVFKYIAGPRLPKIPIPLLNIINGGLHAGNKLKIQEFIILPIKFNTFKEAFFAAIEVYRNLKGLISERYGKIYTAVGDEGGFSPPLEETREALDLIYTSINNAGYQGKIYMGMDPAASDFYDPKKEKYIIDGKELNPTQLLEFYLDLAKEYPIVYLEDPFEENSFDMFGELQNKLNSTIVIGDDLYTTNIKYLKIGIEKRSTKGVVVKPNQVGTISETFEFTNLARRNSIKLVTSHRSGETEDNFIAEFAVGIESDFIKTGAPARGERTSKYNKLLEIENKFGLEYGGKYFYL</sequence>
<reference key="1">
    <citation type="journal article" date="2009" name="Proc. Natl. Acad. Sci. U.S.A.">
        <title>Biogeography of the Sulfolobus islandicus pan-genome.</title>
        <authorList>
            <person name="Reno M.L."/>
            <person name="Held N.L."/>
            <person name="Fields C.J."/>
            <person name="Burke P.V."/>
            <person name="Whitaker R.J."/>
        </authorList>
    </citation>
    <scope>NUCLEOTIDE SEQUENCE [LARGE SCALE GENOMIC DNA]</scope>
    <source>
        <strain>Y.N.15.51 / Yellowstone #2</strain>
    </source>
</reference>
<organism>
    <name type="scientific">Saccharolobus islandicus (strain Y.N.15.51 / Yellowstone #2)</name>
    <name type="common">Sulfolobus islandicus</name>
    <dbReference type="NCBI Taxonomy" id="419942"/>
    <lineage>
        <taxon>Archaea</taxon>
        <taxon>Thermoproteota</taxon>
        <taxon>Thermoprotei</taxon>
        <taxon>Sulfolobales</taxon>
        <taxon>Sulfolobaceae</taxon>
        <taxon>Saccharolobus</taxon>
    </lineage>
</organism>
<name>ENO_SACI1</name>
<keyword id="KW-0963">Cytoplasm</keyword>
<keyword id="KW-0324">Glycolysis</keyword>
<keyword id="KW-0456">Lyase</keyword>
<keyword id="KW-0460">Magnesium</keyword>
<keyword id="KW-0479">Metal-binding</keyword>
<keyword id="KW-0964">Secreted</keyword>
<proteinExistence type="inferred from homology"/>
<gene>
    <name evidence="1" type="primary">eno</name>
    <name type="ordered locus">YN1551_1555</name>
</gene>
<evidence type="ECO:0000255" key="1">
    <source>
        <dbReference type="HAMAP-Rule" id="MF_00318"/>
    </source>
</evidence>
<accession>C3NHN3</accession>
<protein>
    <recommendedName>
        <fullName evidence="1">Enolase</fullName>
        <ecNumber evidence="1">4.2.1.11</ecNumber>
    </recommendedName>
    <alternativeName>
        <fullName evidence="1">2-phospho-D-glycerate hydro-lyase</fullName>
    </alternativeName>
    <alternativeName>
        <fullName evidence="1">2-phosphoglycerate dehydratase</fullName>
    </alternativeName>
</protein>
<dbReference type="EC" id="4.2.1.11" evidence="1"/>
<dbReference type="EMBL" id="CP001404">
    <property type="protein sequence ID" value="ACP48643.1"/>
    <property type="molecule type" value="Genomic_DNA"/>
</dbReference>
<dbReference type="RefSeq" id="WP_012717497.1">
    <property type="nucleotide sequence ID" value="NC_012623.1"/>
</dbReference>
<dbReference type="SMR" id="C3NHN3"/>
<dbReference type="GeneID" id="7809146"/>
<dbReference type="KEGG" id="sin:YN1551_1555"/>
<dbReference type="HOGENOM" id="CLU_031223_2_1_2"/>
<dbReference type="UniPathway" id="UPA00109">
    <property type="reaction ID" value="UER00187"/>
</dbReference>
<dbReference type="Proteomes" id="UP000006818">
    <property type="component" value="Chromosome"/>
</dbReference>
<dbReference type="GO" id="GO:0009986">
    <property type="term" value="C:cell surface"/>
    <property type="evidence" value="ECO:0007669"/>
    <property type="project" value="UniProtKB-SubCell"/>
</dbReference>
<dbReference type="GO" id="GO:0005576">
    <property type="term" value="C:extracellular region"/>
    <property type="evidence" value="ECO:0007669"/>
    <property type="project" value="UniProtKB-SubCell"/>
</dbReference>
<dbReference type="GO" id="GO:0000015">
    <property type="term" value="C:phosphopyruvate hydratase complex"/>
    <property type="evidence" value="ECO:0007669"/>
    <property type="project" value="InterPro"/>
</dbReference>
<dbReference type="GO" id="GO:0000287">
    <property type="term" value="F:magnesium ion binding"/>
    <property type="evidence" value="ECO:0007669"/>
    <property type="project" value="UniProtKB-UniRule"/>
</dbReference>
<dbReference type="GO" id="GO:0004634">
    <property type="term" value="F:phosphopyruvate hydratase activity"/>
    <property type="evidence" value="ECO:0007669"/>
    <property type="project" value="UniProtKB-UniRule"/>
</dbReference>
<dbReference type="GO" id="GO:0006096">
    <property type="term" value="P:glycolytic process"/>
    <property type="evidence" value="ECO:0007669"/>
    <property type="project" value="UniProtKB-UniRule"/>
</dbReference>
<dbReference type="CDD" id="cd03313">
    <property type="entry name" value="enolase"/>
    <property type="match status" value="1"/>
</dbReference>
<dbReference type="Gene3D" id="3.20.20.120">
    <property type="entry name" value="Enolase-like C-terminal domain"/>
    <property type="match status" value="1"/>
</dbReference>
<dbReference type="Gene3D" id="3.30.390.10">
    <property type="entry name" value="Enolase-like, N-terminal domain"/>
    <property type="match status" value="1"/>
</dbReference>
<dbReference type="HAMAP" id="MF_00318">
    <property type="entry name" value="Enolase"/>
    <property type="match status" value="1"/>
</dbReference>
<dbReference type="InterPro" id="IPR000941">
    <property type="entry name" value="Enolase"/>
</dbReference>
<dbReference type="InterPro" id="IPR036849">
    <property type="entry name" value="Enolase-like_C_sf"/>
</dbReference>
<dbReference type="InterPro" id="IPR029017">
    <property type="entry name" value="Enolase-like_N"/>
</dbReference>
<dbReference type="InterPro" id="IPR020810">
    <property type="entry name" value="Enolase_C"/>
</dbReference>
<dbReference type="InterPro" id="IPR020809">
    <property type="entry name" value="Enolase_CS"/>
</dbReference>
<dbReference type="InterPro" id="IPR020811">
    <property type="entry name" value="Enolase_N"/>
</dbReference>
<dbReference type="NCBIfam" id="TIGR01060">
    <property type="entry name" value="eno"/>
    <property type="match status" value="1"/>
</dbReference>
<dbReference type="PANTHER" id="PTHR11902">
    <property type="entry name" value="ENOLASE"/>
    <property type="match status" value="1"/>
</dbReference>
<dbReference type="PANTHER" id="PTHR11902:SF1">
    <property type="entry name" value="ENOLASE"/>
    <property type="match status" value="1"/>
</dbReference>
<dbReference type="Pfam" id="PF00113">
    <property type="entry name" value="Enolase_C"/>
    <property type="match status" value="1"/>
</dbReference>
<dbReference type="Pfam" id="PF03952">
    <property type="entry name" value="Enolase_N"/>
    <property type="match status" value="1"/>
</dbReference>
<dbReference type="PIRSF" id="PIRSF001400">
    <property type="entry name" value="Enolase"/>
    <property type="match status" value="1"/>
</dbReference>
<dbReference type="PRINTS" id="PR00148">
    <property type="entry name" value="ENOLASE"/>
</dbReference>
<dbReference type="SFLD" id="SFLDF00002">
    <property type="entry name" value="enolase"/>
    <property type="match status" value="1"/>
</dbReference>
<dbReference type="SFLD" id="SFLDG00178">
    <property type="entry name" value="enolase"/>
    <property type="match status" value="1"/>
</dbReference>
<dbReference type="SMART" id="SM01192">
    <property type="entry name" value="Enolase_C"/>
    <property type="match status" value="1"/>
</dbReference>
<dbReference type="SMART" id="SM01193">
    <property type="entry name" value="Enolase_N"/>
    <property type="match status" value="1"/>
</dbReference>
<dbReference type="SUPFAM" id="SSF51604">
    <property type="entry name" value="Enolase C-terminal domain-like"/>
    <property type="match status" value="1"/>
</dbReference>
<dbReference type="SUPFAM" id="SSF54826">
    <property type="entry name" value="Enolase N-terminal domain-like"/>
    <property type="match status" value="1"/>
</dbReference>
<dbReference type="PROSITE" id="PS00164">
    <property type="entry name" value="ENOLASE"/>
    <property type="match status" value="1"/>
</dbReference>